<accession>A9N2E6</accession>
<organism>
    <name type="scientific">Salmonella paratyphi B (strain ATCC BAA-1250 / SPB7)</name>
    <dbReference type="NCBI Taxonomy" id="1016998"/>
    <lineage>
        <taxon>Bacteria</taxon>
        <taxon>Pseudomonadati</taxon>
        <taxon>Pseudomonadota</taxon>
        <taxon>Gammaproteobacteria</taxon>
        <taxon>Enterobacterales</taxon>
        <taxon>Enterobacteriaceae</taxon>
        <taxon>Salmonella</taxon>
    </lineage>
</organism>
<evidence type="ECO:0000255" key="1">
    <source>
        <dbReference type="HAMAP-Rule" id="MF_01541"/>
    </source>
</evidence>
<dbReference type="EC" id="1.8.1.2" evidence="1"/>
<dbReference type="EMBL" id="CP000886">
    <property type="protein sequence ID" value="ABX68997.1"/>
    <property type="molecule type" value="Genomic_DNA"/>
</dbReference>
<dbReference type="RefSeq" id="WP_000210915.1">
    <property type="nucleotide sequence ID" value="NC_010102.1"/>
</dbReference>
<dbReference type="SMR" id="A9N2E6"/>
<dbReference type="KEGG" id="spq:SPAB_03657"/>
<dbReference type="PATRIC" id="fig|1016998.12.peg.3444"/>
<dbReference type="HOGENOM" id="CLU_001570_17_7_6"/>
<dbReference type="BioCyc" id="SENT1016998:SPAB_RS14905-MONOMER"/>
<dbReference type="UniPathway" id="UPA00140">
    <property type="reaction ID" value="UER00207"/>
</dbReference>
<dbReference type="Proteomes" id="UP000008556">
    <property type="component" value="Chromosome"/>
</dbReference>
<dbReference type="GO" id="GO:0005829">
    <property type="term" value="C:cytosol"/>
    <property type="evidence" value="ECO:0007669"/>
    <property type="project" value="TreeGrafter"/>
</dbReference>
<dbReference type="GO" id="GO:0050660">
    <property type="term" value="F:flavin adenine dinucleotide binding"/>
    <property type="evidence" value="ECO:0007669"/>
    <property type="project" value="InterPro"/>
</dbReference>
<dbReference type="GO" id="GO:0010181">
    <property type="term" value="F:FMN binding"/>
    <property type="evidence" value="ECO:0007669"/>
    <property type="project" value="InterPro"/>
</dbReference>
<dbReference type="GO" id="GO:0004783">
    <property type="term" value="F:sulfite reductase (NADPH) activity"/>
    <property type="evidence" value="ECO:0007669"/>
    <property type="project" value="UniProtKB-UniRule"/>
</dbReference>
<dbReference type="GO" id="GO:0019344">
    <property type="term" value="P:cysteine biosynthetic process"/>
    <property type="evidence" value="ECO:0007669"/>
    <property type="project" value="UniProtKB-KW"/>
</dbReference>
<dbReference type="GO" id="GO:0070814">
    <property type="term" value="P:hydrogen sulfide biosynthetic process"/>
    <property type="evidence" value="ECO:0007669"/>
    <property type="project" value="UniProtKB-UniRule"/>
</dbReference>
<dbReference type="GO" id="GO:0000103">
    <property type="term" value="P:sulfate assimilation"/>
    <property type="evidence" value="ECO:0007669"/>
    <property type="project" value="UniProtKB-UniRule"/>
</dbReference>
<dbReference type="CDD" id="cd06199">
    <property type="entry name" value="SiR"/>
    <property type="match status" value="1"/>
</dbReference>
<dbReference type="FunFam" id="3.40.50.80:FF:000001">
    <property type="entry name" value="NADPH--cytochrome P450 reductase 1"/>
    <property type="match status" value="1"/>
</dbReference>
<dbReference type="FunFam" id="1.20.990.10:FF:000004">
    <property type="entry name" value="Sulfite reductase [NADPH] flavoprotein alpha-component"/>
    <property type="match status" value="1"/>
</dbReference>
<dbReference type="FunFam" id="3.40.50.360:FF:000018">
    <property type="entry name" value="Sulfite reductase [NADPH] flavoprotein alpha-component"/>
    <property type="match status" value="1"/>
</dbReference>
<dbReference type="Gene3D" id="3.40.50.360">
    <property type="match status" value="1"/>
</dbReference>
<dbReference type="Gene3D" id="1.20.990.10">
    <property type="entry name" value="NADPH-cytochrome p450 Reductase, Chain A, domain 3"/>
    <property type="match status" value="1"/>
</dbReference>
<dbReference type="Gene3D" id="3.40.50.80">
    <property type="entry name" value="Nucleotide-binding domain of ferredoxin-NADP reductase (FNR) module"/>
    <property type="match status" value="1"/>
</dbReference>
<dbReference type="Gene3D" id="2.40.30.10">
    <property type="entry name" value="Translation factors"/>
    <property type="match status" value="1"/>
</dbReference>
<dbReference type="HAMAP" id="MF_01541">
    <property type="entry name" value="CysJ"/>
    <property type="match status" value="1"/>
</dbReference>
<dbReference type="InterPro" id="IPR010199">
    <property type="entry name" value="CysJ"/>
</dbReference>
<dbReference type="InterPro" id="IPR003097">
    <property type="entry name" value="CysJ-like_FAD-binding"/>
</dbReference>
<dbReference type="InterPro" id="IPR029758">
    <property type="entry name" value="CysJ_Proteobact"/>
</dbReference>
<dbReference type="InterPro" id="IPR017927">
    <property type="entry name" value="FAD-bd_FR_type"/>
</dbReference>
<dbReference type="InterPro" id="IPR001094">
    <property type="entry name" value="Flavdoxin-like"/>
</dbReference>
<dbReference type="InterPro" id="IPR008254">
    <property type="entry name" value="Flavodoxin/NO_synth"/>
</dbReference>
<dbReference type="InterPro" id="IPR001709">
    <property type="entry name" value="Flavoprot_Pyr_Nucl_cyt_Rdtase"/>
</dbReference>
<dbReference type="InterPro" id="IPR029039">
    <property type="entry name" value="Flavoprotein-like_sf"/>
</dbReference>
<dbReference type="InterPro" id="IPR039261">
    <property type="entry name" value="FNR_nucleotide-bd"/>
</dbReference>
<dbReference type="InterPro" id="IPR023173">
    <property type="entry name" value="NADPH_Cyt_P450_Rdtase_alpha"/>
</dbReference>
<dbReference type="InterPro" id="IPR001433">
    <property type="entry name" value="OxRdtase_FAD/NAD-bd"/>
</dbReference>
<dbReference type="InterPro" id="IPR017938">
    <property type="entry name" value="Riboflavin_synthase-like_b-brl"/>
</dbReference>
<dbReference type="NCBIfam" id="TIGR01931">
    <property type="entry name" value="cysJ"/>
    <property type="match status" value="1"/>
</dbReference>
<dbReference type="NCBIfam" id="NF008197">
    <property type="entry name" value="PRK10953.1"/>
    <property type="match status" value="1"/>
</dbReference>
<dbReference type="PANTHER" id="PTHR19384:SF128">
    <property type="entry name" value="NADPH OXIDOREDUCTASE A"/>
    <property type="match status" value="1"/>
</dbReference>
<dbReference type="PANTHER" id="PTHR19384">
    <property type="entry name" value="NITRIC OXIDE SYNTHASE-RELATED"/>
    <property type="match status" value="1"/>
</dbReference>
<dbReference type="Pfam" id="PF00667">
    <property type="entry name" value="FAD_binding_1"/>
    <property type="match status" value="1"/>
</dbReference>
<dbReference type="Pfam" id="PF00258">
    <property type="entry name" value="Flavodoxin_1"/>
    <property type="match status" value="1"/>
</dbReference>
<dbReference type="Pfam" id="PF00175">
    <property type="entry name" value="NAD_binding_1"/>
    <property type="match status" value="1"/>
</dbReference>
<dbReference type="PIRSF" id="PIRSF000207">
    <property type="entry name" value="SiR-FP_CysJ"/>
    <property type="match status" value="1"/>
</dbReference>
<dbReference type="PRINTS" id="PR00369">
    <property type="entry name" value="FLAVODOXIN"/>
</dbReference>
<dbReference type="PRINTS" id="PR00371">
    <property type="entry name" value="FPNCR"/>
</dbReference>
<dbReference type="SUPFAM" id="SSF52343">
    <property type="entry name" value="Ferredoxin reductase-like, C-terminal NADP-linked domain"/>
    <property type="match status" value="1"/>
</dbReference>
<dbReference type="SUPFAM" id="SSF52218">
    <property type="entry name" value="Flavoproteins"/>
    <property type="match status" value="1"/>
</dbReference>
<dbReference type="SUPFAM" id="SSF63380">
    <property type="entry name" value="Riboflavin synthase domain-like"/>
    <property type="match status" value="1"/>
</dbReference>
<dbReference type="PROSITE" id="PS51384">
    <property type="entry name" value="FAD_FR"/>
    <property type="match status" value="1"/>
</dbReference>
<dbReference type="PROSITE" id="PS50902">
    <property type="entry name" value="FLAVODOXIN_LIKE"/>
    <property type="match status" value="1"/>
</dbReference>
<comment type="function">
    <text evidence="1">Component of the sulfite reductase complex that catalyzes the 6-electron reduction of sulfite to sulfide. This is one of several activities required for the biosynthesis of L-cysteine from sulfate. The flavoprotein component catalyzes the electron flow from NADPH -&gt; FAD -&gt; FMN to the hemoprotein component.</text>
</comment>
<comment type="catalytic activity">
    <reaction evidence="1">
        <text>hydrogen sulfide + 3 NADP(+) + 3 H2O = sulfite + 3 NADPH + 4 H(+)</text>
        <dbReference type="Rhea" id="RHEA:13801"/>
        <dbReference type="ChEBI" id="CHEBI:15377"/>
        <dbReference type="ChEBI" id="CHEBI:15378"/>
        <dbReference type="ChEBI" id="CHEBI:17359"/>
        <dbReference type="ChEBI" id="CHEBI:29919"/>
        <dbReference type="ChEBI" id="CHEBI:57783"/>
        <dbReference type="ChEBI" id="CHEBI:58349"/>
        <dbReference type="EC" id="1.8.1.2"/>
    </reaction>
</comment>
<comment type="cofactor">
    <cofactor evidence="1">
        <name>FAD</name>
        <dbReference type="ChEBI" id="CHEBI:57692"/>
    </cofactor>
    <text evidence="1">Binds 1 FAD per subunit.</text>
</comment>
<comment type="cofactor">
    <cofactor evidence="1">
        <name>FMN</name>
        <dbReference type="ChEBI" id="CHEBI:58210"/>
    </cofactor>
    <text evidence="1">Binds 1 FMN per subunit.</text>
</comment>
<comment type="pathway">
    <text evidence="1">Sulfur metabolism; hydrogen sulfide biosynthesis; hydrogen sulfide from sulfite (NADPH route): step 1/1.</text>
</comment>
<comment type="subunit">
    <text evidence="1">Alpha(8)-beta(8). The alpha component is a flavoprotein, the beta component is a hemoprotein.</text>
</comment>
<comment type="similarity">
    <text evidence="1">Belongs to the NADPH-dependent sulphite reductase flavoprotein subunit CysJ family.</text>
</comment>
<comment type="similarity">
    <text evidence="1">In the N-terminal section; belongs to the flavodoxin family.</text>
</comment>
<comment type="similarity">
    <text evidence="1">In the C-terminal section; belongs to the flavoprotein pyridine nucleotide cytochrome reductase family.</text>
</comment>
<sequence>MTTPAPLTGLLPLNPEQLARLQAATTDLTPEQLAWVSGYFWGVLNPRSGAVAVTPAPEGKMPGVTLISASQTGNARRVAEALRDDLLAANLNVTLVNAGDYKFKQIASEKLLVIVTSTQGEGEPPEEAVALHKFLFSKKAPKLENTAFAVFSLGDTSYEFFCQSGKDFDSKLAELGGERLLDRVDADVEYQAAASEWRARVVDVLKSRAPVAAPSQSVATGSVNDIHTSPYTKDAPLAATLSVNQKITGRNSEKDVRHIEIDLGDSGLRYQPGDALGVWYQNDPALVKELVELLWLKGDEPVTVDGKTLPLAEALEWHFELTVNTANIVENYATLTRSESLLPLVGDKAQLQHYAATTPIVDMVRFSLAQLDAQALIDLLRPLTPRLYSIASAQAEVESEVHITVGVVCYDIEGRARAGGASSFLADRVEEEGEVRVFIEHNDNFRLPANPETPVIMIGPGTGIAPFRAFMQQRAAEGVEGKNWLFFGNPHFTEDFLYQVEWQRYVKEGGLSRIDLAWSRDQKEKIYVQDKLREQGAELWRWINDGAHIYVCGDARRMAADVEKALLEVIAEFGGMDLESADEYLSELRVERRYQRDVY</sequence>
<reference key="1">
    <citation type="submission" date="2007-11" db="EMBL/GenBank/DDBJ databases">
        <authorList>
            <consortium name="The Salmonella enterica serovar Paratyphi B Genome Sequencing Project"/>
            <person name="McClelland M."/>
            <person name="Sanderson E.K."/>
            <person name="Porwollik S."/>
            <person name="Spieth J."/>
            <person name="Clifton W.S."/>
            <person name="Fulton R."/>
            <person name="Cordes M."/>
            <person name="Wollam A."/>
            <person name="Shah N."/>
            <person name="Pepin K."/>
            <person name="Bhonagiri V."/>
            <person name="Nash W."/>
            <person name="Johnson M."/>
            <person name="Thiruvilangam P."/>
            <person name="Wilson R."/>
        </authorList>
    </citation>
    <scope>NUCLEOTIDE SEQUENCE [LARGE SCALE GENOMIC DNA]</scope>
    <source>
        <strain>ATCC BAA-1250 / SPB7</strain>
    </source>
</reference>
<keyword id="KW-0028">Amino-acid biosynthesis</keyword>
<keyword id="KW-0198">Cysteine biosynthesis</keyword>
<keyword id="KW-0249">Electron transport</keyword>
<keyword id="KW-0274">FAD</keyword>
<keyword id="KW-0285">Flavoprotein</keyword>
<keyword id="KW-0288">FMN</keyword>
<keyword id="KW-0521">NADP</keyword>
<keyword id="KW-0560">Oxidoreductase</keyword>
<keyword id="KW-0813">Transport</keyword>
<feature type="chain" id="PRO_1000087640" description="Sulfite reductase [NADPH] flavoprotein alpha-component">
    <location>
        <begin position="1"/>
        <end position="599"/>
    </location>
</feature>
<feature type="domain" description="Flavodoxin-like" evidence="1">
    <location>
        <begin position="64"/>
        <end position="202"/>
    </location>
</feature>
<feature type="domain" description="FAD-binding FR-type" evidence="1">
    <location>
        <begin position="234"/>
        <end position="448"/>
    </location>
</feature>
<feature type="binding site" evidence="1">
    <location>
        <begin position="70"/>
        <end position="75"/>
    </location>
    <ligand>
        <name>FMN</name>
        <dbReference type="ChEBI" id="CHEBI:58210"/>
    </ligand>
</feature>
<feature type="binding site" evidence="1">
    <location>
        <begin position="117"/>
        <end position="120"/>
    </location>
    <ligand>
        <name>FMN</name>
        <dbReference type="ChEBI" id="CHEBI:58210"/>
    </ligand>
</feature>
<feature type="binding site" evidence="1">
    <location>
        <begin position="153"/>
        <end position="162"/>
    </location>
    <ligand>
        <name>FMN</name>
        <dbReference type="ChEBI" id="CHEBI:58210"/>
    </ligand>
</feature>
<feature type="binding site" evidence="1">
    <location>
        <position position="322"/>
    </location>
    <ligand>
        <name>FAD</name>
        <dbReference type="ChEBI" id="CHEBI:57692"/>
    </ligand>
</feature>
<feature type="binding site" evidence="1">
    <location>
        <position position="356"/>
    </location>
    <ligand>
        <name>FAD</name>
        <dbReference type="ChEBI" id="CHEBI:57692"/>
    </ligand>
</feature>
<feature type="binding site" evidence="1">
    <location>
        <begin position="386"/>
        <end position="389"/>
    </location>
    <ligand>
        <name>FAD</name>
        <dbReference type="ChEBI" id="CHEBI:57692"/>
    </ligand>
</feature>
<feature type="binding site" evidence="1">
    <location>
        <begin position="404"/>
        <end position="406"/>
    </location>
    <ligand>
        <name>FAD</name>
        <dbReference type="ChEBI" id="CHEBI:57692"/>
    </ligand>
</feature>
<feature type="binding site" evidence="1">
    <location>
        <position position="410"/>
    </location>
    <ligand>
        <name>FAD</name>
        <dbReference type="ChEBI" id="CHEBI:57692"/>
    </ligand>
</feature>
<feature type="binding site" evidence="1">
    <location>
        <begin position="419"/>
        <end position="422"/>
    </location>
    <ligand>
        <name>FAD</name>
        <dbReference type="ChEBI" id="CHEBI:57692"/>
    </ligand>
</feature>
<feature type="binding site" evidence="1">
    <location>
        <begin position="519"/>
        <end position="520"/>
    </location>
    <ligand>
        <name>NADP(+)</name>
        <dbReference type="ChEBI" id="CHEBI:58349"/>
    </ligand>
</feature>
<feature type="binding site" evidence="1">
    <location>
        <begin position="525"/>
        <end position="529"/>
    </location>
    <ligand>
        <name>NADP(+)</name>
        <dbReference type="ChEBI" id="CHEBI:58349"/>
    </ligand>
</feature>
<feature type="binding site" evidence="1">
    <location>
        <position position="561"/>
    </location>
    <ligand>
        <name>NADP(+)</name>
        <dbReference type="ChEBI" id="CHEBI:58349"/>
    </ligand>
</feature>
<feature type="binding site" evidence="1">
    <location>
        <position position="599"/>
    </location>
    <ligand>
        <name>FAD</name>
        <dbReference type="ChEBI" id="CHEBI:57692"/>
    </ligand>
</feature>
<gene>
    <name evidence="1" type="primary">cysJ</name>
    <name type="ordered locus">SPAB_03657</name>
</gene>
<name>CYSJ_SALPB</name>
<protein>
    <recommendedName>
        <fullName evidence="1">Sulfite reductase [NADPH] flavoprotein alpha-component</fullName>
        <shortName evidence="1">SiR-FP</shortName>
        <ecNumber evidence="1">1.8.1.2</ecNumber>
    </recommendedName>
</protein>
<proteinExistence type="inferred from homology"/>